<accession>A1TTX1</accession>
<evidence type="ECO:0000255" key="1">
    <source>
        <dbReference type="HAMAP-Rule" id="MF_01361"/>
    </source>
</evidence>
<proteinExistence type="inferred from homology"/>
<organism>
    <name type="scientific">Paracidovorax citrulli (strain AAC00-1)</name>
    <name type="common">Acidovorax citrulli</name>
    <dbReference type="NCBI Taxonomy" id="397945"/>
    <lineage>
        <taxon>Bacteria</taxon>
        <taxon>Pseudomonadati</taxon>
        <taxon>Pseudomonadota</taxon>
        <taxon>Betaproteobacteria</taxon>
        <taxon>Burkholderiales</taxon>
        <taxon>Comamonadaceae</taxon>
        <taxon>Paracidovorax</taxon>
    </lineage>
</organism>
<sequence length="54" mass="5670">MLHYAVVFLVIALIAALFGFGGIAAGAVGIAKILFFVFVIMAVVTFVLSLLKRG</sequence>
<feature type="chain" id="PRO_5000208508" description="UPF0391 membrane protein Aave_3864">
    <location>
        <begin position="1"/>
        <end position="54"/>
    </location>
</feature>
<feature type="transmembrane region" description="Helical" evidence="1">
    <location>
        <begin position="5"/>
        <end position="25"/>
    </location>
</feature>
<feature type="transmembrane region" description="Helical" evidence="1">
    <location>
        <begin position="28"/>
        <end position="48"/>
    </location>
</feature>
<dbReference type="EMBL" id="CP000512">
    <property type="protein sequence ID" value="ABM34409.1"/>
    <property type="molecule type" value="Genomic_DNA"/>
</dbReference>
<dbReference type="RefSeq" id="WP_011796896.1">
    <property type="nucleotide sequence ID" value="NC_008752.1"/>
</dbReference>
<dbReference type="STRING" id="397945.Aave_3864"/>
<dbReference type="GeneID" id="34235509"/>
<dbReference type="KEGG" id="aav:Aave_3864"/>
<dbReference type="eggNOG" id="COG5487">
    <property type="taxonomic scope" value="Bacteria"/>
</dbReference>
<dbReference type="HOGENOM" id="CLU_187346_0_1_4"/>
<dbReference type="Proteomes" id="UP000002596">
    <property type="component" value="Chromosome"/>
</dbReference>
<dbReference type="GO" id="GO:0005886">
    <property type="term" value="C:plasma membrane"/>
    <property type="evidence" value="ECO:0007669"/>
    <property type="project" value="UniProtKB-SubCell"/>
</dbReference>
<dbReference type="HAMAP" id="MF_01361">
    <property type="entry name" value="UPF0391"/>
    <property type="match status" value="1"/>
</dbReference>
<dbReference type="InterPro" id="IPR009760">
    <property type="entry name" value="DUF1328"/>
</dbReference>
<dbReference type="NCBIfam" id="NF010226">
    <property type="entry name" value="PRK13682.1-1"/>
    <property type="match status" value="1"/>
</dbReference>
<dbReference type="NCBIfam" id="NF010229">
    <property type="entry name" value="PRK13682.1-4"/>
    <property type="match status" value="1"/>
</dbReference>
<dbReference type="Pfam" id="PF07043">
    <property type="entry name" value="DUF1328"/>
    <property type="match status" value="1"/>
</dbReference>
<dbReference type="PIRSF" id="PIRSF036466">
    <property type="entry name" value="UCP036466"/>
    <property type="match status" value="1"/>
</dbReference>
<reference key="1">
    <citation type="submission" date="2006-12" db="EMBL/GenBank/DDBJ databases">
        <title>Complete sequence of Acidovorax avenae subsp. citrulli AAC00-1.</title>
        <authorList>
            <person name="Copeland A."/>
            <person name="Lucas S."/>
            <person name="Lapidus A."/>
            <person name="Barry K."/>
            <person name="Detter J.C."/>
            <person name="Glavina del Rio T."/>
            <person name="Dalin E."/>
            <person name="Tice H."/>
            <person name="Pitluck S."/>
            <person name="Kiss H."/>
            <person name="Brettin T."/>
            <person name="Bruce D."/>
            <person name="Han C."/>
            <person name="Tapia R."/>
            <person name="Gilna P."/>
            <person name="Schmutz J."/>
            <person name="Larimer F."/>
            <person name="Land M."/>
            <person name="Hauser L."/>
            <person name="Kyrpides N."/>
            <person name="Kim E."/>
            <person name="Stahl D."/>
            <person name="Richardson P."/>
        </authorList>
    </citation>
    <scope>NUCLEOTIDE SEQUENCE [LARGE SCALE GENOMIC DNA]</scope>
    <source>
        <strain>AAC00-1</strain>
    </source>
</reference>
<name>Y3864_PARC0</name>
<protein>
    <recommendedName>
        <fullName evidence="1">UPF0391 membrane protein Aave_3864</fullName>
    </recommendedName>
</protein>
<comment type="subcellular location">
    <subcellularLocation>
        <location evidence="1">Cell membrane</location>
        <topology evidence="1">Multi-pass membrane protein</topology>
    </subcellularLocation>
</comment>
<comment type="similarity">
    <text evidence="1">Belongs to the UPF0391 family.</text>
</comment>
<keyword id="KW-1003">Cell membrane</keyword>
<keyword id="KW-0472">Membrane</keyword>
<keyword id="KW-0812">Transmembrane</keyword>
<keyword id="KW-1133">Transmembrane helix</keyword>
<gene>
    <name type="ordered locus">Aave_3864</name>
</gene>